<proteinExistence type="inferred from homology"/>
<comment type="function">
    <text evidence="1">With S4 and S12 plays an important role in translational accuracy.</text>
</comment>
<comment type="function">
    <text evidence="1">Located at the back of the 30S subunit body where it stabilizes the conformation of the head with respect to the body.</text>
</comment>
<comment type="subunit">
    <text evidence="1">Part of the 30S ribosomal subunit. Contacts proteins S4 and S8.</text>
</comment>
<comment type="domain">
    <text>The N-terminal domain interacts with the head of the 30S subunit; the C-terminal domain interacts with the body and contacts protein S4. The interaction surface between S4 and S5 is involved in control of translational fidelity.</text>
</comment>
<comment type="similarity">
    <text evidence="1">Belongs to the universal ribosomal protein uS5 family.</text>
</comment>
<protein>
    <recommendedName>
        <fullName evidence="1">Small ribosomal subunit protein uS5</fullName>
    </recommendedName>
    <alternativeName>
        <fullName evidence="2">30S ribosomal protein S5</fullName>
    </alternativeName>
</protein>
<organism>
    <name type="scientific">Pseudomonas putida (strain GB-1)</name>
    <dbReference type="NCBI Taxonomy" id="76869"/>
    <lineage>
        <taxon>Bacteria</taxon>
        <taxon>Pseudomonadati</taxon>
        <taxon>Pseudomonadota</taxon>
        <taxon>Gammaproteobacteria</taxon>
        <taxon>Pseudomonadales</taxon>
        <taxon>Pseudomonadaceae</taxon>
        <taxon>Pseudomonas</taxon>
    </lineage>
</organism>
<dbReference type="EMBL" id="CP000926">
    <property type="protein sequence ID" value="ABY96412.1"/>
    <property type="molecule type" value="Genomic_DNA"/>
</dbReference>
<dbReference type="RefSeq" id="WP_003255465.1">
    <property type="nucleotide sequence ID" value="NC_010322.1"/>
</dbReference>
<dbReference type="SMR" id="B0KK84"/>
<dbReference type="GeneID" id="97165996"/>
<dbReference type="KEGG" id="ppg:PputGB1_0501"/>
<dbReference type="eggNOG" id="COG0098">
    <property type="taxonomic scope" value="Bacteria"/>
</dbReference>
<dbReference type="HOGENOM" id="CLU_065898_2_2_6"/>
<dbReference type="Proteomes" id="UP000002157">
    <property type="component" value="Chromosome"/>
</dbReference>
<dbReference type="GO" id="GO:0015935">
    <property type="term" value="C:small ribosomal subunit"/>
    <property type="evidence" value="ECO:0007669"/>
    <property type="project" value="InterPro"/>
</dbReference>
<dbReference type="GO" id="GO:0019843">
    <property type="term" value="F:rRNA binding"/>
    <property type="evidence" value="ECO:0007669"/>
    <property type="project" value="UniProtKB-UniRule"/>
</dbReference>
<dbReference type="GO" id="GO:0003735">
    <property type="term" value="F:structural constituent of ribosome"/>
    <property type="evidence" value="ECO:0007669"/>
    <property type="project" value="InterPro"/>
</dbReference>
<dbReference type="GO" id="GO:0006412">
    <property type="term" value="P:translation"/>
    <property type="evidence" value="ECO:0007669"/>
    <property type="project" value="UniProtKB-UniRule"/>
</dbReference>
<dbReference type="FunFam" id="3.30.160.20:FF:000001">
    <property type="entry name" value="30S ribosomal protein S5"/>
    <property type="match status" value="1"/>
</dbReference>
<dbReference type="FunFam" id="3.30.230.10:FF:000002">
    <property type="entry name" value="30S ribosomal protein S5"/>
    <property type="match status" value="1"/>
</dbReference>
<dbReference type="Gene3D" id="3.30.160.20">
    <property type="match status" value="1"/>
</dbReference>
<dbReference type="Gene3D" id="3.30.230.10">
    <property type="match status" value="1"/>
</dbReference>
<dbReference type="HAMAP" id="MF_01307_B">
    <property type="entry name" value="Ribosomal_uS5_B"/>
    <property type="match status" value="1"/>
</dbReference>
<dbReference type="InterPro" id="IPR020568">
    <property type="entry name" value="Ribosomal_Su5_D2-typ_SF"/>
</dbReference>
<dbReference type="InterPro" id="IPR000851">
    <property type="entry name" value="Ribosomal_uS5"/>
</dbReference>
<dbReference type="InterPro" id="IPR005712">
    <property type="entry name" value="Ribosomal_uS5_bac-type"/>
</dbReference>
<dbReference type="InterPro" id="IPR005324">
    <property type="entry name" value="Ribosomal_uS5_C"/>
</dbReference>
<dbReference type="InterPro" id="IPR013810">
    <property type="entry name" value="Ribosomal_uS5_N"/>
</dbReference>
<dbReference type="InterPro" id="IPR018192">
    <property type="entry name" value="Ribosomal_uS5_N_CS"/>
</dbReference>
<dbReference type="InterPro" id="IPR014721">
    <property type="entry name" value="Ribsml_uS5_D2-typ_fold_subgr"/>
</dbReference>
<dbReference type="NCBIfam" id="TIGR01021">
    <property type="entry name" value="rpsE_bact"/>
    <property type="match status" value="1"/>
</dbReference>
<dbReference type="PANTHER" id="PTHR48432">
    <property type="entry name" value="S5 DRBM DOMAIN-CONTAINING PROTEIN"/>
    <property type="match status" value="1"/>
</dbReference>
<dbReference type="PANTHER" id="PTHR48432:SF1">
    <property type="entry name" value="S5 DRBM DOMAIN-CONTAINING PROTEIN"/>
    <property type="match status" value="1"/>
</dbReference>
<dbReference type="Pfam" id="PF00333">
    <property type="entry name" value="Ribosomal_S5"/>
    <property type="match status" value="1"/>
</dbReference>
<dbReference type="Pfam" id="PF03719">
    <property type="entry name" value="Ribosomal_S5_C"/>
    <property type="match status" value="1"/>
</dbReference>
<dbReference type="SUPFAM" id="SSF54768">
    <property type="entry name" value="dsRNA-binding domain-like"/>
    <property type="match status" value="1"/>
</dbReference>
<dbReference type="SUPFAM" id="SSF54211">
    <property type="entry name" value="Ribosomal protein S5 domain 2-like"/>
    <property type="match status" value="1"/>
</dbReference>
<dbReference type="PROSITE" id="PS00585">
    <property type="entry name" value="RIBOSOMAL_S5"/>
    <property type="match status" value="1"/>
</dbReference>
<dbReference type="PROSITE" id="PS50881">
    <property type="entry name" value="S5_DSRBD"/>
    <property type="match status" value="1"/>
</dbReference>
<gene>
    <name evidence="1" type="primary">rpsE</name>
    <name type="ordered locus">PputGB1_0501</name>
</gene>
<feature type="chain" id="PRO_1000140884" description="Small ribosomal subunit protein uS5">
    <location>
        <begin position="1"/>
        <end position="166"/>
    </location>
</feature>
<feature type="domain" description="S5 DRBM" evidence="1">
    <location>
        <begin position="12"/>
        <end position="75"/>
    </location>
</feature>
<keyword id="KW-0687">Ribonucleoprotein</keyword>
<keyword id="KW-0689">Ribosomal protein</keyword>
<keyword id="KW-0694">RNA-binding</keyword>
<keyword id="KW-0699">rRNA-binding</keyword>
<name>RS5_PSEPG</name>
<accession>B0KK84</accession>
<sequence length="166" mass="17666">MANNDQKRDEGYIEKLVQVNRVAKTVKGGRIFTFTALTVVGDGKGRVGFGRGKSREVPAAIQKAMEAARRNMIQVDLKGTTLQYATKAAHGASKVYMQPASEGTGIIAGGAMRAVLEVAGVQNVLAKCYGSTNPVNVVYATFKGLKAMQSPESIAAKRGKSVEEIF</sequence>
<evidence type="ECO:0000255" key="1">
    <source>
        <dbReference type="HAMAP-Rule" id="MF_01307"/>
    </source>
</evidence>
<evidence type="ECO:0000305" key="2"/>
<reference key="1">
    <citation type="submission" date="2008-01" db="EMBL/GenBank/DDBJ databases">
        <title>Complete sequence of Pseudomonas putida GB-1.</title>
        <authorList>
            <consortium name="US DOE Joint Genome Institute"/>
            <person name="Copeland A."/>
            <person name="Lucas S."/>
            <person name="Lapidus A."/>
            <person name="Barry K."/>
            <person name="Glavina del Rio T."/>
            <person name="Dalin E."/>
            <person name="Tice H."/>
            <person name="Pitluck S."/>
            <person name="Bruce D."/>
            <person name="Goodwin L."/>
            <person name="Chertkov O."/>
            <person name="Brettin T."/>
            <person name="Detter J.C."/>
            <person name="Han C."/>
            <person name="Kuske C.R."/>
            <person name="Schmutz J."/>
            <person name="Larimer F."/>
            <person name="Land M."/>
            <person name="Hauser L."/>
            <person name="Kyrpides N."/>
            <person name="Kim E."/>
            <person name="McCarthy J.K."/>
            <person name="Richardson P."/>
        </authorList>
    </citation>
    <scope>NUCLEOTIDE SEQUENCE [LARGE SCALE GENOMIC DNA]</scope>
    <source>
        <strain>GB-1</strain>
    </source>
</reference>